<geneLocation type="plasmid">
    <name>ColB4-K98</name>
</geneLocation>
<name>TRAM9_ECOLX</name>
<organism>
    <name type="scientific">Escherichia coli</name>
    <dbReference type="NCBI Taxonomy" id="562"/>
    <lineage>
        <taxon>Bacteria</taxon>
        <taxon>Pseudomonadati</taxon>
        <taxon>Pseudomonadota</taxon>
        <taxon>Gammaproteobacteria</taxon>
        <taxon>Enterobacterales</taxon>
        <taxon>Enterobacteriaceae</taxon>
        <taxon>Escherichia</taxon>
    </lineage>
</organism>
<reference key="1">
    <citation type="journal article" date="1986" name="J. Bacteriol.">
        <title>Origin of transfer of IncF plasmids and nucleotide sequences of the type II oriT, traM, and traY alleles from ColB4-K98 and the type IV traY allele from R100-1.</title>
        <authorList>
            <person name="Finlay B.B."/>
            <person name="Frost L.S."/>
            <person name="Paranchych W."/>
        </authorList>
    </citation>
    <scope>NUCLEOTIDE SEQUENCE [GENOMIC DNA]</scope>
</reference>
<keyword id="KW-0184">Conjugation</keyword>
<keyword id="KW-0963">Cytoplasm</keyword>
<keyword id="KW-0238">DNA-binding</keyword>
<keyword id="KW-0614">Plasmid</keyword>
<keyword id="KW-0804">Transcription</keyword>
<keyword id="KW-0805">Transcription regulation</keyword>
<comment type="function">
    <text evidence="1">Conjugative DNA transfer (CDT) is the unidirectional transfer of ssDNA plasmid from a donor to a recipient cell. It is the central mechanism by which antibiotic resistance and virulence factors are propagated in bacterial populations. Part of the relaxosome, which facilitates a site- and strand-specific cut in the origin of transfer by TraI, at the nic site. Probably autoregulates its own expression. Plasmid specificity is conferred by the TraD-TraM pair (By similarity).</text>
</comment>
<comment type="subunit">
    <text evidence="1">Homotetramer. 2 homotetramers cooperatively bind to DNA although they do not contact each other; cooperativity is achieved by DNA kinking and unwinding. Part of the relaxosome, a complex composed of plasmid encoded TraI, TraM, TraY and host-encoded IHF which binds to the F plasmid origin of transfer (oriT) in a site- and sequence-specific manner. Interacts with TraD. Also interacts with TraY (By similarity).</text>
</comment>
<comment type="subcellular location">
    <subcellularLocation>
        <location evidence="1">Cytoplasm</location>
    </subcellularLocation>
</comment>
<comment type="similarity">
    <text evidence="2">Belongs to the relaxosome TraM family.</text>
</comment>
<evidence type="ECO:0000250" key="1"/>
<evidence type="ECO:0000305" key="2"/>
<dbReference type="EMBL" id="AH003616">
    <property type="protein sequence ID" value="AAB04664.1"/>
    <property type="molecule type" value="Genomic_DNA"/>
</dbReference>
<dbReference type="PIR" id="A25033">
    <property type="entry name" value="JCECMK"/>
</dbReference>
<dbReference type="RefSeq" id="WP_000124981.1">
    <property type="nucleotide sequence ID" value="NZ_WXYV01000003.1"/>
</dbReference>
<dbReference type="RefSeq" id="YP_001965451.1">
    <property type="nucleotide sequence ID" value="NC_010862.1"/>
</dbReference>
<dbReference type="RefSeq" id="YP_006953517.1">
    <property type="nucleotide sequence ID" value="NC_019073.1"/>
</dbReference>
<dbReference type="RefSeq" id="YP_006953838.1">
    <property type="nucleotide sequence ID" value="NC_019089.1"/>
</dbReference>
<dbReference type="RefSeq" id="YP_009066475.1">
    <property type="nucleotide sequence ID" value="NC_025106.1"/>
</dbReference>
<dbReference type="SMR" id="P18807"/>
<dbReference type="OMA" id="NCIDEIH"/>
<dbReference type="GO" id="GO:0005737">
    <property type="term" value="C:cytoplasm"/>
    <property type="evidence" value="ECO:0007669"/>
    <property type="project" value="UniProtKB-SubCell"/>
</dbReference>
<dbReference type="GO" id="GO:0003677">
    <property type="term" value="F:DNA binding"/>
    <property type="evidence" value="ECO:0007669"/>
    <property type="project" value="UniProtKB-KW"/>
</dbReference>
<dbReference type="CDD" id="cd14804">
    <property type="entry name" value="Tra_M"/>
    <property type="match status" value="1"/>
</dbReference>
<dbReference type="Gene3D" id="1.10.287.2320">
    <property type="match status" value="1"/>
</dbReference>
<dbReference type="Gene3D" id="1.10.10.450">
    <property type="entry name" value="TraM protein, DNA-binding"/>
    <property type="match status" value="1"/>
</dbReference>
<dbReference type="InterPro" id="IPR010992">
    <property type="entry name" value="IHF-like_DNA-bd_dom_sf"/>
</dbReference>
<dbReference type="InterPro" id="IPR042073">
    <property type="entry name" value="TraM_DNA-bd"/>
</dbReference>
<dbReference type="InterPro" id="IPR007925">
    <property type="entry name" value="TRelaxosome_TraM"/>
</dbReference>
<dbReference type="NCBIfam" id="NF010267">
    <property type="entry name" value="PRK13713.1"/>
    <property type="match status" value="1"/>
</dbReference>
<dbReference type="Pfam" id="PF05261">
    <property type="entry name" value="Tra_M"/>
    <property type="match status" value="1"/>
</dbReference>
<dbReference type="SUPFAM" id="SSF47729">
    <property type="entry name" value="IHF-like DNA-binding proteins"/>
    <property type="match status" value="1"/>
</dbReference>
<dbReference type="SUPFAM" id="SSF140581">
    <property type="entry name" value="TraM-like"/>
    <property type="match status" value="1"/>
</dbReference>
<protein>
    <recommendedName>
        <fullName>Relaxosome protein TraM</fullName>
    </recommendedName>
</protein>
<sequence length="127" mass="14543">MARVNLYISNEVHEKINMIVEKRRQEGARDKDISLSGTASMLLELGLRVYDAQMERKESAFNQTEFNKLLLECVVKTQSTVAKILGIESLSPHVSGNPKFEYASMVDDIREKVSVEMDRFFPKNDDE</sequence>
<gene>
    <name type="primary">traM</name>
</gene>
<accession>P18807</accession>
<feature type="chain" id="PRO_0000068473" description="Relaxosome protein TraM">
    <location>
        <begin position="1"/>
        <end position="127"/>
    </location>
</feature>
<proteinExistence type="inferred from homology"/>